<reference key="1">
    <citation type="journal article" date="1995" name="Science">
        <title>Whole-genome random sequencing and assembly of Haemophilus influenzae Rd.</title>
        <authorList>
            <person name="Fleischmann R.D."/>
            <person name="Adams M.D."/>
            <person name="White O."/>
            <person name="Clayton R.A."/>
            <person name="Kirkness E.F."/>
            <person name="Kerlavage A.R."/>
            <person name="Bult C.J."/>
            <person name="Tomb J.-F."/>
            <person name="Dougherty B.A."/>
            <person name="Merrick J.M."/>
            <person name="McKenney K."/>
            <person name="Sutton G.G."/>
            <person name="FitzHugh W."/>
            <person name="Fields C.A."/>
            <person name="Gocayne J.D."/>
            <person name="Scott J.D."/>
            <person name="Shirley R."/>
            <person name="Liu L.-I."/>
            <person name="Glodek A."/>
            <person name="Kelley J.M."/>
            <person name="Weidman J.F."/>
            <person name="Phillips C.A."/>
            <person name="Spriggs T."/>
            <person name="Hedblom E."/>
            <person name="Cotton M.D."/>
            <person name="Utterback T.R."/>
            <person name="Hanna M.C."/>
            <person name="Nguyen D.T."/>
            <person name="Saudek D.M."/>
            <person name="Brandon R.C."/>
            <person name="Fine L.D."/>
            <person name="Fritchman J.L."/>
            <person name="Fuhrmann J.L."/>
            <person name="Geoghagen N.S.M."/>
            <person name="Gnehm C.L."/>
            <person name="McDonald L.A."/>
            <person name="Small K.V."/>
            <person name="Fraser C.M."/>
            <person name="Smith H.O."/>
            <person name="Venter J.C."/>
        </authorList>
    </citation>
    <scope>NUCLEOTIDE SEQUENCE [LARGE SCALE GENOMIC DNA]</scope>
    <source>
        <strain>ATCC 51907 / DSM 11121 / KW20 / Rd</strain>
    </source>
</reference>
<feature type="chain" id="PRO_0000190328" description="Recombination protein RecR">
    <location>
        <begin position="1"/>
        <end position="200"/>
    </location>
</feature>
<feature type="domain" description="Toprim" evidence="1">
    <location>
        <begin position="81"/>
        <end position="176"/>
    </location>
</feature>
<feature type="zinc finger region" description="C4-type" evidence="1">
    <location>
        <begin position="57"/>
        <end position="72"/>
    </location>
</feature>
<evidence type="ECO:0000255" key="1">
    <source>
        <dbReference type="HAMAP-Rule" id="MF_00017"/>
    </source>
</evidence>
<organism>
    <name type="scientific">Haemophilus influenzae (strain ATCC 51907 / DSM 11121 / KW20 / Rd)</name>
    <dbReference type="NCBI Taxonomy" id="71421"/>
    <lineage>
        <taxon>Bacteria</taxon>
        <taxon>Pseudomonadati</taxon>
        <taxon>Pseudomonadota</taxon>
        <taxon>Gammaproteobacteria</taxon>
        <taxon>Pasteurellales</taxon>
        <taxon>Pasteurellaceae</taxon>
        <taxon>Haemophilus</taxon>
    </lineage>
</organism>
<keyword id="KW-0227">DNA damage</keyword>
<keyword id="KW-0233">DNA recombination</keyword>
<keyword id="KW-0234">DNA repair</keyword>
<keyword id="KW-0479">Metal-binding</keyword>
<keyword id="KW-1185">Reference proteome</keyword>
<keyword id="KW-0862">Zinc</keyword>
<keyword id="KW-0863">Zinc-finger</keyword>
<dbReference type="EMBL" id="L42023">
    <property type="protein sequence ID" value="AAC22102.1"/>
    <property type="molecule type" value="Genomic_DNA"/>
</dbReference>
<dbReference type="PIR" id="F64068">
    <property type="entry name" value="F64068"/>
</dbReference>
<dbReference type="RefSeq" id="NP_438604.1">
    <property type="nucleotide sequence ID" value="NC_000907.1"/>
</dbReference>
<dbReference type="SMR" id="P44712"/>
<dbReference type="STRING" id="71421.HI_0443"/>
<dbReference type="EnsemblBacteria" id="AAC22102">
    <property type="protein sequence ID" value="AAC22102"/>
    <property type="gene ID" value="HI_0443"/>
</dbReference>
<dbReference type="KEGG" id="hin:HI_0443"/>
<dbReference type="PATRIC" id="fig|71421.8.peg.463"/>
<dbReference type="eggNOG" id="COG0353">
    <property type="taxonomic scope" value="Bacteria"/>
</dbReference>
<dbReference type="HOGENOM" id="CLU_060739_1_2_6"/>
<dbReference type="OrthoDB" id="9802672at2"/>
<dbReference type="PhylomeDB" id="P44712"/>
<dbReference type="BioCyc" id="HINF71421:G1GJ1-458-MONOMER"/>
<dbReference type="Proteomes" id="UP000000579">
    <property type="component" value="Chromosome"/>
</dbReference>
<dbReference type="GO" id="GO:0003677">
    <property type="term" value="F:DNA binding"/>
    <property type="evidence" value="ECO:0007669"/>
    <property type="project" value="UniProtKB-UniRule"/>
</dbReference>
<dbReference type="GO" id="GO:0008270">
    <property type="term" value="F:zinc ion binding"/>
    <property type="evidence" value="ECO:0007669"/>
    <property type="project" value="UniProtKB-KW"/>
</dbReference>
<dbReference type="GO" id="GO:0006302">
    <property type="term" value="P:double-strand break repair"/>
    <property type="evidence" value="ECO:0000318"/>
    <property type="project" value="GO_Central"/>
</dbReference>
<dbReference type="GO" id="GO:0000725">
    <property type="term" value="P:recombinational repair"/>
    <property type="evidence" value="ECO:0000318"/>
    <property type="project" value="GO_Central"/>
</dbReference>
<dbReference type="CDD" id="cd01025">
    <property type="entry name" value="TOPRIM_recR"/>
    <property type="match status" value="1"/>
</dbReference>
<dbReference type="FunFam" id="1.10.8.420:FF:000001">
    <property type="entry name" value="Recombination protein RecR"/>
    <property type="match status" value="1"/>
</dbReference>
<dbReference type="FunFam" id="3.40.1360.10:FF:000001">
    <property type="entry name" value="Recombination protein RecR"/>
    <property type="match status" value="1"/>
</dbReference>
<dbReference type="Gene3D" id="3.40.1360.10">
    <property type="match status" value="1"/>
</dbReference>
<dbReference type="Gene3D" id="6.10.250.240">
    <property type="match status" value="1"/>
</dbReference>
<dbReference type="Gene3D" id="1.10.8.420">
    <property type="entry name" value="RecR Domain 1"/>
    <property type="match status" value="1"/>
</dbReference>
<dbReference type="HAMAP" id="MF_00017">
    <property type="entry name" value="RecR"/>
    <property type="match status" value="1"/>
</dbReference>
<dbReference type="InterPro" id="IPR000093">
    <property type="entry name" value="DNA_Rcmb_RecR"/>
</dbReference>
<dbReference type="InterPro" id="IPR023627">
    <property type="entry name" value="Rcmb_RecR"/>
</dbReference>
<dbReference type="InterPro" id="IPR015967">
    <property type="entry name" value="Rcmb_RecR_Znf"/>
</dbReference>
<dbReference type="InterPro" id="IPR006171">
    <property type="entry name" value="TOPRIM_dom"/>
</dbReference>
<dbReference type="InterPro" id="IPR034137">
    <property type="entry name" value="TOPRIM_RecR"/>
</dbReference>
<dbReference type="NCBIfam" id="TIGR00615">
    <property type="entry name" value="recR"/>
    <property type="match status" value="1"/>
</dbReference>
<dbReference type="PANTHER" id="PTHR30446">
    <property type="entry name" value="RECOMBINATION PROTEIN RECR"/>
    <property type="match status" value="1"/>
</dbReference>
<dbReference type="PANTHER" id="PTHR30446:SF0">
    <property type="entry name" value="RECOMBINATION PROTEIN RECR"/>
    <property type="match status" value="1"/>
</dbReference>
<dbReference type="Pfam" id="PF21175">
    <property type="entry name" value="RecR_C"/>
    <property type="match status" value="1"/>
</dbReference>
<dbReference type="Pfam" id="PF21176">
    <property type="entry name" value="RecR_HhH"/>
    <property type="match status" value="1"/>
</dbReference>
<dbReference type="Pfam" id="PF02132">
    <property type="entry name" value="RecR_ZnF"/>
    <property type="match status" value="1"/>
</dbReference>
<dbReference type="Pfam" id="PF13662">
    <property type="entry name" value="Toprim_4"/>
    <property type="match status" value="1"/>
</dbReference>
<dbReference type="SMART" id="SM00493">
    <property type="entry name" value="TOPRIM"/>
    <property type="match status" value="1"/>
</dbReference>
<dbReference type="SUPFAM" id="SSF111304">
    <property type="entry name" value="Recombination protein RecR"/>
    <property type="match status" value="1"/>
</dbReference>
<dbReference type="PROSITE" id="PS01300">
    <property type="entry name" value="RECR"/>
    <property type="match status" value="1"/>
</dbReference>
<dbReference type="PROSITE" id="PS50880">
    <property type="entry name" value="TOPRIM"/>
    <property type="match status" value="1"/>
</dbReference>
<sequence length="200" mass="22107">MQSSPLLEHLIENLRCLPGVGPKSAQRMAYHLLQRNRSGGMNLARALTEAMSKIGHCSQCRDFTEEDTCNICNNPRRQNSGLLCVVEMPADIQAIEQTGQFSGRYFVLMGHLSPLDGIGPREIGLDLLQKRLVEESFHEVILATNPTVEGDATANYIAEMCRQHNIKVSRIAHGIPVGGELETVDGTTLTHSFLGRRQID</sequence>
<gene>
    <name evidence="1" type="primary">recR</name>
    <name type="ordered locus">HI_0443</name>
</gene>
<protein>
    <recommendedName>
        <fullName evidence="1">Recombination protein RecR</fullName>
    </recommendedName>
</protein>
<name>RECR_HAEIN</name>
<proteinExistence type="inferred from homology"/>
<comment type="function">
    <text evidence="1">May play a role in DNA repair. It seems to be involved in an RecBC-independent recombinational process of DNA repair. It may act with RecF and RecO.</text>
</comment>
<comment type="similarity">
    <text evidence="1">Belongs to the RecR family.</text>
</comment>
<accession>P44712</accession>